<sequence length="264" mass="30363">MNYLNIYNLLIEKGLNRGNDKSLLTYYTETHHIIPRCMGGTDDKTNLVLLTPEEHFTAHLLLFKIYRLPKLALAIRMMCYSSDGTRLNNKMYGWIKTAVSSSISESMKEFWKDDDNKKYMSNARRNAGKPIYQYDLNGNFIRKYRCITDAAEDMSYSCSTSIKQCVDGKRKTAGGFQWKYYYSDNIGKPSRMSNATKQKMSKSKRGITQKRNVPVFQYDTTGKLLRVFPRIKDAAVSVKGCMSNIKKCISGKSKIAYGYVWAYS</sequence>
<organismHost>
    <name type="scientific">Escherichia coli</name>
    <dbReference type="NCBI Taxonomy" id="562"/>
</organismHost>
<comment type="similarity">
    <text evidence="1">To phage T4 mobC and mobD.</text>
</comment>
<comment type="sequence caution" evidence="1">
    <conflict type="erroneous initiation">
        <sequence resource="EMBL-CDS" id="CAA25939"/>
    </conflict>
</comment>
<evidence type="ECO:0000305" key="1"/>
<gene>
    <name type="primary">mobB</name>
    <name type="synonym">agt.1</name>
</gene>
<protein>
    <recommendedName>
        <fullName>Probable mobile endonuclease B</fullName>
    </recommendedName>
</protein>
<feature type="chain" id="PRO_0000164950" description="Probable mobile endonuclease B">
    <location>
        <begin position="1"/>
        <end position="264"/>
    </location>
</feature>
<feature type="domain" description="HNH">
    <location>
        <begin position="25"/>
        <end position="50"/>
    </location>
</feature>
<keyword id="KW-0255">Endonuclease</keyword>
<keyword id="KW-0378">Hydrolase</keyword>
<keyword id="KW-0540">Nuclease</keyword>
<keyword id="KW-1185">Reference proteome</keyword>
<proteinExistence type="predicted"/>
<organism>
    <name type="scientific">Enterobacteria phage T4</name>
    <name type="common">Bacteriophage T4</name>
    <dbReference type="NCBI Taxonomy" id="10665"/>
    <lineage>
        <taxon>Viruses</taxon>
        <taxon>Duplodnaviria</taxon>
        <taxon>Heunggongvirae</taxon>
        <taxon>Uroviricota</taxon>
        <taxon>Caudoviricetes</taxon>
        <taxon>Straboviridae</taxon>
        <taxon>Tevenvirinae</taxon>
        <taxon>Tequatrovirus</taxon>
    </lineage>
</organism>
<reference key="1">
    <citation type="journal article" date="1985" name="EMBO J.">
        <title>Genes 55, alpha gt, 47 and 46 of bacteriophage T4: the genomic organization as deduced by sequence analysis.</title>
        <authorList>
            <person name="Gram H."/>
            <person name="Rueger W."/>
        </authorList>
    </citation>
    <scope>NUCLEOTIDE SEQUENCE [GENOMIC DNA]</scope>
</reference>
<reference key="2">
    <citation type="journal article" date="2003" name="Microbiol. Mol. Biol. Rev.">
        <title>Bacteriophage T4 genome.</title>
        <authorList>
            <person name="Miller E.S."/>
            <person name="Kutter E."/>
            <person name="Mosig G."/>
            <person name="Arisaka F."/>
            <person name="Kunisawa T."/>
            <person name="Ruger W."/>
        </authorList>
    </citation>
    <scope>NUCLEOTIDE SEQUENCE [LARGE SCALE GENOMIC DNA]</scope>
</reference>
<dbReference type="EMBL" id="X01804">
    <property type="protein sequence ID" value="CAA25938.1"/>
    <property type="molecule type" value="Genomic_DNA"/>
</dbReference>
<dbReference type="EMBL" id="X01804">
    <property type="protein sequence ID" value="CAA25939.1"/>
    <property type="status" value="ALT_INIT"/>
    <property type="molecule type" value="Genomic_DNA"/>
</dbReference>
<dbReference type="EMBL" id="AF158101">
    <property type="protein sequence ID" value="AAD42590.1"/>
    <property type="molecule type" value="Genomic_DNA"/>
</dbReference>
<dbReference type="PIR" id="T10155">
    <property type="entry name" value="T10155"/>
</dbReference>
<dbReference type="RefSeq" id="NP_049674.1">
    <property type="nucleotide sequence ID" value="NC_000866.4"/>
</dbReference>
<dbReference type="GeneID" id="1258824"/>
<dbReference type="KEGG" id="vg:1258824"/>
<dbReference type="OrthoDB" id="19703at10239"/>
<dbReference type="Proteomes" id="UP000009087">
    <property type="component" value="Segment"/>
</dbReference>
<dbReference type="GO" id="GO:0004519">
    <property type="term" value="F:endonuclease activity"/>
    <property type="evidence" value="ECO:0007669"/>
    <property type="project" value="UniProtKB-KW"/>
</dbReference>
<dbReference type="GO" id="GO:0003676">
    <property type="term" value="F:nucleic acid binding"/>
    <property type="evidence" value="ECO:0007669"/>
    <property type="project" value="InterPro"/>
</dbReference>
<dbReference type="GO" id="GO:0008270">
    <property type="term" value="F:zinc ion binding"/>
    <property type="evidence" value="ECO:0007669"/>
    <property type="project" value="InterPro"/>
</dbReference>
<dbReference type="CDD" id="cd00085">
    <property type="entry name" value="HNHc"/>
    <property type="match status" value="1"/>
</dbReference>
<dbReference type="Gene3D" id="1.10.10.10">
    <property type="entry name" value="Winged helix-like DNA-binding domain superfamily/Winged helix DNA-binding domain"/>
    <property type="match status" value="2"/>
</dbReference>
<dbReference type="InterPro" id="IPR002711">
    <property type="entry name" value="HNH"/>
</dbReference>
<dbReference type="InterPro" id="IPR003615">
    <property type="entry name" value="HNH_nuc"/>
</dbReference>
<dbReference type="InterPro" id="IPR003647">
    <property type="entry name" value="Intron_nuc_1_rpt"/>
</dbReference>
<dbReference type="InterPro" id="IPR010896">
    <property type="entry name" value="NUMOD1"/>
</dbReference>
<dbReference type="InterPro" id="IPR036388">
    <property type="entry name" value="WH-like_DNA-bd_sf"/>
</dbReference>
<dbReference type="Pfam" id="PF01844">
    <property type="entry name" value="HNH"/>
    <property type="match status" value="1"/>
</dbReference>
<dbReference type="Pfam" id="PF07453">
    <property type="entry name" value="NUMOD1"/>
    <property type="match status" value="2"/>
</dbReference>
<dbReference type="SMART" id="SM00507">
    <property type="entry name" value="HNHc"/>
    <property type="match status" value="1"/>
</dbReference>
<dbReference type="SMART" id="SM00497">
    <property type="entry name" value="IENR1"/>
    <property type="match status" value="2"/>
</dbReference>
<dbReference type="SUPFAM" id="SSF64496">
    <property type="entry name" value="DNA-binding domain of intron-encoded endonucleases"/>
    <property type="match status" value="1"/>
</dbReference>
<name>MOBB_BPT4</name>
<accession>P13329</accession>